<comment type="function">
    <text evidence="2">Component of the ubiquinol-cytochrome c reductase complex (complex III or cytochrome b-c1 complex) that is part of the mitochondrial respiratory chain. The b-c1 complex mediates electron transfer from ubiquinol to cytochrome c. Contributes to the generation of a proton gradient across the mitochondrial membrane that is then used for ATP synthesis.</text>
</comment>
<comment type="cofactor">
    <cofactor evidence="2">
        <name>heme b</name>
        <dbReference type="ChEBI" id="CHEBI:60344"/>
    </cofactor>
    <text evidence="2">Binds 2 heme b groups non-covalently.</text>
</comment>
<comment type="subunit">
    <text evidence="2">The cytochrome bc1 complex contains 11 subunits: 3 respiratory subunits (MT-CYB, CYC1 and UQCRFS1), 2 core proteins (UQCRC1 and UQCRC2) and 6 low-molecular weight proteins (UQCRH/QCR6, UQCRB/QCR7, UQCRQ/QCR8, UQCR10/QCR9, UQCR11/QCR10 and a cleavage product of UQCRFS1). This cytochrome bc1 complex then forms a dimer.</text>
</comment>
<comment type="subcellular location">
    <subcellularLocation>
        <location evidence="2">Mitochondrion inner membrane</location>
        <topology evidence="2">Multi-pass membrane protein</topology>
    </subcellularLocation>
</comment>
<comment type="miscellaneous">
    <text evidence="1">Heme 1 (or BL or b562) is low-potential and absorbs at about 562 nm, and heme 2 (or BH or b566) is high-potential and absorbs at about 566 nm.</text>
</comment>
<comment type="similarity">
    <text evidence="3 4">Belongs to the cytochrome b family.</text>
</comment>
<comment type="caution">
    <text evidence="2">The full-length protein contains only eight transmembrane helices, not nine as predicted by bioinformatics tools.</text>
</comment>
<gene>
    <name type="primary">MT-CYB</name>
    <name type="synonym">COB</name>
    <name type="synonym">CYTB</name>
    <name type="synonym">MTCYB</name>
</gene>
<protein>
    <recommendedName>
        <fullName>Cytochrome b</fullName>
    </recommendedName>
    <alternativeName>
        <fullName>Complex III subunit 3</fullName>
    </alternativeName>
    <alternativeName>
        <fullName>Complex III subunit III</fullName>
    </alternativeName>
    <alternativeName>
        <fullName>Cytochrome b-c1 complex subunit 3</fullName>
    </alternativeName>
    <alternativeName>
        <fullName>Ubiquinol-cytochrome-c reductase complex cytochrome b subunit</fullName>
    </alternativeName>
</protein>
<proteinExistence type="inferred from homology"/>
<organism>
    <name type="scientific">Suncus stoliczkanus</name>
    <name type="common">Anderson's shrew</name>
    <dbReference type="NCBI Taxonomy" id="268751"/>
    <lineage>
        <taxon>Eukaryota</taxon>
        <taxon>Metazoa</taxon>
        <taxon>Chordata</taxon>
        <taxon>Craniata</taxon>
        <taxon>Vertebrata</taxon>
        <taxon>Euteleostomi</taxon>
        <taxon>Mammalia</taxon>
        <taxon>Eutheria</taxon>
        <taxon>Laurasiatheria</taxon>
        <taxon>Eulipotyphla</taxon>
        <taxon>Soricidae</taxon>
        <taxon>Crocidurinae</taxon>
        <taxon>Suncus</taxon>
    </lineage>
</organism>
<geneLocation type="mitochondrion"/>
<name>CYB_SUNST</name>
<reference key="1">
    <citation type="submission" date="2004-03" db="EMBL/GenBank/DDBJ databases">
        <title>Molecular phylogenetics of the Soricidae (Insectivora, Mammalia) based on mitochondrial cytochrome b gene sequences.</title>
        <authorList>
            <person name="Ohdachi S.D."/>
            <person name="Iwasa M.A."/>
            <person name="Abe H."/>
            <person name="Vogel P."/>
            <person name="Oshida T."/>
            <person name="Lin L.K."/>
            <person name="Hasegawa M."/>
        </authorList>
    </citation>
    <scope>NUCLEOTIDE SEQUENCE [GENOMIC DNA]</scope>
</reference>
<feature type="chain" id="PRO_0000235205" description="Cytochrome b">
    <location>
        <begin position="1"/>
        <end position="379"/>
    </location>
</feature>
<feature type="transmembrane region" description="Helical" evidence="2">
    <location>
        <begin position="33"/>
        <end position="53"/>
    </location>
</feature>
<feature type="transmembrane region" description="Helical" evidence="2">
    <location>
        <begin position="77"/>
        <end position="98"/>
    </location>
</feature>
<feature type="transmembrane region" description="Helical" evidence="2">
    <location>
        <begin position="113"/>
        <end position="133"/>
    </location>
</feature>
<feature type="transmembrane region" description="Helical" evidence="2">
    <location>
        <begin position="178"/>
        <end position="198"/>
    </location>
</feature>
<feature type="transmembrane region" description="Helical" evidence="2">
    <location>
        <begin position="226"/>
        <end position="246"/>
    </location>
</feature>
<feature type="transmembrane region" description="Helical" evidence="2">
    <location>
        <begin position="288"/>
        <end position="308"/>
    </location>
</feature>
<feature type="transmembrane region" description="Helical" evidence="2">
    <location>
        <begin position="320"/>
        <end position="340"/>
    </location>
</feature>
<feature type="transmembrane region" description="Helical" evidence="2">
    <location>
        <begin position="347"/>
        <end position="367"/>
    </location>
</feature>
<feature type="binding site" description="axial binding residue" evidence="2">
    <location>
        <position position="83"/>
    </location>
    <ligand>
        <name>heme b</name>
        <dbReference type="ChEBI" id="CHEBI:60344"/>
        <label>b562</label>
    </ligand>
    <ligandPart>
        <name>Fe</name>
        <dbReference type="ChEBI" id="CHEBI:18248"/>
    </ligandPart>
</feature>
<feature type="binding site" description="axial binding residue" evidence="2">
    <location>
        <position position="97"/>
    </location>
    <ligand>
        <name>heme b</name>
        <dbReference type="ChEBI" id="CHEBI:60344"/>
        <label>b566</label>
    </ligand>
    <ligandPart>
        <name>Fe</name>
        <dbReference type="ChEBI" id="CHEBI:18248"/>
    </ligandPart>
</feature>
<feature type="binding site" description="axial binding residue" evidence="2">
    <location>
        <position position="182"/>
    </location>
    <ligand>
        <name>heme b</name>
        <dbReference type="ChEBI" id="CHEBI:60344"/>
        <label>b562</label>
    </ligand>
    <ligandPart>
        <name>Fe</name>
        <dbReference type="ChEBI" id="CHEBI:18248"/>
    </ligandPart>
</feature>
<feature type="binding site" description="axial binding residue" evidence="2">
    <location>
        <position position="196"/>
    </location>
    <ligand>
        <name>heme b</name>
        <dbReference type="ChEBI" id="CHEBI:60344"/>
        <label>b566</label>
    </ligand>
    <ligandPart>
        <name>Fe</name>
        <dbReference type="ChEBI" id="CHEBI:18248"/>
    </ligandPart>
</feature>
<feature type="binding site" evidence="2">
    <location>
        <position position="201"/>
    </location>
    <ligand>
        <name>a ubiquinone</name>
        <dbReference type="ChEBI" id="CHEBI:16389"/>
    </ligand>
</feature>
<keyword id="KW-0249">Electron transport</keyword>
<keyword id="KW-0349">Heme</keyword>
<keyword id="KW-0408">Iron</keyword>
<keyword id="KW-0472">Membrane</keyword>
<keyword id="KW-0479">Metal-binding</keyword>
<keyword id="KW-0496">Mitochondrion</keyword>
<keyword id="KW-0999">Mitochondrion inner membrane</keyword>
<keyword id="KW-0679">Respiratory chain</keyword>
<keyword id="KW-0812">Transmembrane</keyword>
<keyword id="KW-1133">Transmembrane helix</keyword>
<keyword id="KW-0813">Transport</keyword>
<keyword id="KW-0830">Ubiquinone</keyword>
<accession>Q1XIQ4</accession>
<sequence>MTNIRKTHPLMKIVNSSFIDLPAPSNISSWWNFGSLLGICLIAQILTGLFLAMHYTSDTMTAFSSVTHICRDVNYGWLIRYLHANGASMFFICLFLHVGRGLYYGSYMFLETWNIGVLLLFAVMATAFMGYVLPWGQMSFWGATVITNLLSAIPYIGTNLVEWIWGGFSVDKATLTRFFAFHFILPFIVAALAGVHLLFLHETGSNNPSGLNSDADKIPFHPYYTIKDILGALIMITALSSLVLFSPDMLGDPDNYIPANPLNTPPHIKPEWYFLFAYAILRSIPNKLGGVLALVLSILILMVIPLLHTAKQRSMTFRPMSQCMFWILVADLFTLTWIGGQPVEHPFVVIGQLASMIYFLMIILIMPITSMIENKLLKW</sequence>
<dbReference type="EMBL" id="AB175077">
    <property type="protein sequence ID" value="BAE92642.1"/>
    <property type="molecule type" value="Genomic_DNA"/>
</dbReference>
<dbReference type="SMR" id="Q1XIQ4"/>
<dbReference type="GO" id="GO:0005743">
    <property type="term" value="C:mitochondrial inner membrane"/>
    <property type="evidence" value="ECO:0007669"/>
    <property type="project" value="UniProtKB-SubCell"/>
</dbReference>
<dbReference type="GO" id="GO:0045275">
    <property type="term" value="C:respiratory chain complex III"/>
    <property type="evidence" value="ECO:0007669"/>
    <property type="project" value="InterPro"/>
</dbReference>
<dbReference type="GO" id="GO:0046872">
    <property type="term" value="F:metal ion binding"/>
    <property type="evidence" value="ECO:0007669"/>
    <property type="project" value="UniProtKB-KW"/>
</dbReference>
<dbReference type="GO" id="GO:0008121">
    <property type="term" value="F:ubiquinol-cytochrome-c reductase activity"/>
    <property type="evidence" value="ECO:0007669"/>
    <property type="project" value="InterPro"/>
</dbReference>
<dbReference type="GO" id="GO:0006122">
    <property type="term" value="P:mitochondrial electron transport, ubiquinol to cytochrome c"/>
    <property type="evidence" value="ECO:0007669"/>
    <property type="project" value="TreeGrafter"/>
</dbReference>
<dbReference type="CDD" id="cd00290">
    <property type="entry name" value="cytochrome_b_C"/>
    <property type="match status" value="1"/>
</dbReference>
<dbReference type="CDD" id="cd00284">
    <property type="entry name" value="Cytochrome_b_N"/>
    <property type="match status" value="1"/>
</dbReference>
<dbReference type="FunFam" id="1.20.810.10:FF:000002">
    <property type="entry name" value="Cytochrome b"/>
    <property type="match status" value="1"/>
</dbReference>
<dbReference type="Gene3D" id="1.20.810.10">
    <property type="entry name" value="Cytochrome Bc1 Complex, Chain C"/>
    <property type="match status" value="1"/>
</dbReference>
<dbReference type="InterPro" id="IPR005798">
    <property type="entry name" value="Cyt_b/b6_C"/>
</dbReference>
<dbReference type="InterPro" id="IPR036150">
    <property type="entry name" value="Cyt_b/b6_C_sf"/>
</dbReference>
<dbReference type="InterPro" id="IPR005797">
    <property type="entry name" value="Cyt_b/b6_N"/>
</dbReference>
<dbReference type="InterPro" id="IPR027387">
    <property type="entry name" value="Cytb/b6-like_sf"/>
</dbReference>
<dbReference type="InterPro" id="IPR030689">
    <property type="entry name" value="Cytochrome_b"/>
</dbReference>
<dbReference type="InterPro" id="IPR048260">
    <property type="entry name" value="Cytochrome_b_C_euk/bac"/>
</dbReference>
<dbReference type="InterPro" id="IPR048259">
    <property type="entry name" value="Cytochrome_b_N_euk/bac"/>
</dbReference>
<dbReference type="InterPro" id="IPR016174">
    <property type="entry name" value="Di-haem_cyt_TM"/>
</dbReference>
<dbReference type="PANTHER" id="PTHR19271">
    <property type="entry name" value="CYTOCHROME B"/>
    <property type="match status" value="1"/>
</dbReference>
<dbReference type="PANTHER" id="PTHR19271:SF16">
    <property type="entry name" value="CYTOCHROME B"/>
    <property type="match status" value="1"/>
</dbReference>
<dbReference type="Pfam" id="PF00032">
    <property type="entry name" value="Cytochrom_B_C"/>
    <property type="match status" value="1"/>
</dbReference>
<dbReference type="Pfam" id="PF00033">
    <property type="entry name" value="Cytochrome_B"/>
    <property type="match status" value="1"/>
</dbReference>
<dbReference type="PIRSF" id="PIRSF038885">
    <property type="entry name" value="COB"/>
    <property type="match status" value="1"/>
</dbReference>
<dbReference type="SUPFAM" id="SSF81648">
    <property type="entry name" value="a domain/subunit of cytochrome bc1 complex (Ubiquinol-cytochrome c reductase)"/>
    <property type="match status" value="1"/>
</dbReference>
<dbReference type="SUPFAM" id="SSF81342">
    <property type="entry name" value="Transmembrane di-heme cytochromes"/>
    <property type="match status" value="1"/>
</dbReference>
<dbReference type="PROSITE" id="PS51003">
    <property type="entry name" value="CYTB_CTER"/>
    <property type="match status" value="1"/>
</dbReference>
<dbReference type="PROSITE" id="PS51002">
    <property type="entry name" value="CYTB_NTER"/>
    <property type="match status" value="1"/>
</dbReference>
<evidence type="ECO:0000250" key="1"/>
<evidence type="ECO:0000250" key="2">
    <source>
        <dbReference type="UniProtKB" id="P00157"/>
    </source>
</evidence>
<evidence type="ECO:0000255" key="3">
    <source>
        <dbReference type="PROSITE-ProRule" id="PRU00967"/>
    </source>
</evidence>
<evidence type="ECO:0000255" key="4">
    <source>
        <dbReference type="PROSITE-ProRule" id="PRU00968"/>
    </source>
</evidence>